<reference key="1">
    <citation type="journal article" date="1997" name="J. Bacteriol.">
        <title>Complete genome sequence of Methanobacterium thermoautotrophicum deltaH: functional analysis and comparative genomics.</title>
        <authorList>
            <person name="Smith D.R."/>
            <person name="Doucette-Stamm L.A."/>
            <person name="Deloughery C."/>
            <person name="Lee H.-M."/>
            <person name="Dubois J."/>
            <person name="Aldredge T."/>
            <person name="Bashirzadeh R."/>
            <person name="Blakely D."/>
            <person name="Cook R."/>
            <person name="Gilbert K."/>
            <person name="Harrison D."/>
            <person name="Hoang L."/>
            <person name="Keagle P."/>
            <person name="Lumm W."/>
            <person name="Pothier B."/>
            <person name="Qiu D."/>
            <person name="Spadafora R."/>
            <person name="Vicare R."/>
            <person name="Wang Y."/>
            <person name="Wierzbowski J."/>
            <person name="Gibson R."/>
            <person name="Jiwani N."/>
            <person name="Caruso A."/>
            <person name="Bush D."/>
            <person name="Safer H."/>
            <person name="Patwell D."/>
            <person name="Prabhakar S."/>
            <person name="McDougall S."/>
            <person name="Shimer G."/>
            <person name="Goyal A."/>
            <person name="Pietrovski S."/>
            <person name="Church G.M."/>
            <person name="Daniels C.J."/>
            <person name="Mao J.-I."/>
            <person name="Rice P."/>
            <person name="Noelling J."/>
            <person name="Reeve J.N."/>
        </authorList>
    </citation>
    <scope>NUCLEOTIDE SEQUENCE [LARGE SCALE GENOMIC DNA]</scope>
    <source>
        <strain>ATCC 29096 / DSM 1053 / JCM 10044 / NBRC 100330 / Delta H</strain>
    </source>
</reference>
<protein>
    <recommendedName>
        <fullName evidence="1">Flavin prenyltransferase UbiX</fullName>
        <ecNumber evidence="1">2.5.1.129</ecNumber>
    </recommendedName>
</protein>
<sequence>MKVIKMIILAMTGASGVIYGERILKALRGAGVRIGLMITDTAREIIRYELGIEPGALEELADECFDASDFTTSINSGSSPFRAMVIAPCTMKTLSAIANGYAENSLTRAADVCLKERRDLVLVPRETPLRSVHLENMLRVSREGGIILPAMPGFYHKPASIEDMADFIAGKVLDVLGIENDLFRRWTGKDI</sequence>
<accession>O26250</accession>
<organism>
    <name type="scientific">Methanothermobacter thermautotrophicus (strain ATCC 29096 / DSM 1053 / JCM 10044 / NBRC 100330 / Delta H)</name>
    <name type="common">Methanobacterium thermoautotrophicum</name>
    <dbReference type="NCBI Taxonomy" id="187420"/>
    <lineage>
        <taxon>Archaea</taxon>
        <taxon>Methanobacteriati</taxon>
        <taxon>Methanobacteriota</taxon>
        <taxon>Methanomada group</taxon>
        <taxon>Methanobacteria</taxon>
        <taxon>Methanobacteriales</taxon>
        <taxon>Methanobacteriaceae</taxon>
        <taxon>Methanothermobacter</taxon>
    </lineage>
</organism>
<name>UBIX_METTH</name>
<proteinExistence type="inferred from homology"/>
<feature type="chain" id="PRO_0000134979" description="Flavin prenyltransferase UbiX">
    <location>
        <begin position="1"/>
        <end position="191"/>
    </location>
</feature>
<feature type="binding site" evidence="1">
    <location>
        <begin position="13"/>
        <end position="15"/>
    </location>
    <ligand>
        <name>FMN</name>
        <dbReference type="ChEBI" id="CHEBI:58210"/>
    </ligand>
</feature>
<feature type="binding site" evidence="1">
    <location>
        <position position="39"/>
    </location>
    <ligand>
        <name>FMN</name>
        <dbReference type="ChEBI" id="CHEBI:58210"/>
    </ligand>
</feature>
<feature type="binding site" evidence="1">
    <location>
        <begin position="90"/>
        <end position="93"/>
    </location>
    <ligand>
        <name>FMN</name>
        <dbReference type="ChEBI" id="CHEBI:58210"/>
    </ligand>
</feature>
<feature type="binding site" evidence="1">
    <location>
        <position position="125"/>
    </location>
    <ligand>
        <name>FMN</name>
        <dbReference type="ChEBI" id="CHEBI:58210"/>
    </ligand>
</feature>
<feature type="binding site" evidence="1">
    <location>
        <position position="155"/>
    </location>
    <ligand>
        <name>dimethylallyl phosphate</name>
        <dbReference type="ChEBI" id="CHEBI:88052"/>
    </ligand>
</feature>
<feature type="binding site" evidence="1">
    <location>
        <position position="171"/>
    </location>
    <ligand>
        <name>dimethylallyl phosphate</name>
        <dbReference type="ChEBI" id="CHEBI:88052"/>
    </ligand>
</feature>
<comment type="function">
    <text evidence="1">Flavin prenyltransferase that catalyzes the synthesis of the prenylated FMN cofactor (prenyl-FMN) for 4-hydroxy-3-polyprenylbenzoic acid decarboxylase UbiD. The prenyltransferase is metal-independent and links a dimethylallyl moiety from dimethylallyl monophosphate (DMAP) to the flavin N5 and C6 atoms of FMN.</text>
</comment>
<comment type="catalytic activity">
    <reaction evidence="1">
        <text>dimethylallyl phosphate + FMNH2 = prenylated FMNH2 + phosphate</text>
        <dbReference type="Rhea" id="RHEA:37743"/>
        <dbReference type="ChEBI" id="CHEBI:43474"/>
        <dbReference type="ChEBI" id="CHEBI:57618"/>
        <dbReference type="ChEBI" id="CHEBI:87467"/>
        <dbReference type="ChEBI" id="CHEBI:88052"/>
        <dbReference type="EC" id="2.5.1.129"/>
    </reaction>
</comment>
<comment type="similarity">
    <text evidence="1">Belongs to the UbiX/PAD1 family.</text>
</comment>
<evidence type="ECO:0000255" key="1">
    <source>
        <dbReference type="HAMAP-Rule" id="MF_01984"/>
    </source>
</evidence>
<gene>
    <name evidence="1" type="primary">ubiX</name>
    <name type="ordered locus">MTH_147</name>
</gene>
<keyword id="KW-0285">Flavoprotein</keyword>
<keyword id="KW-0288">FMN</keyword>
<keyword id="KW-0637">Prenyltransferase</keyword>
<keyword id="KW-1185">Reference proteome</keyword>
<keyword id="KW-0808">Transferase</keyword>
<dbReference type="EC" id="2.5.1.129" evidence="1"/>
<dbReference type="EMBL" id="AE000666">
    <property type="protein sequence ID" value="AAB84653.1"/>
    <property type="molecule type" value="Genomic_DNA"/>
</dbReference>
<dbReference type="PIR" id="G69062">
    <property type="entry name" value="G69062"/>
</dbReference>
<dbReference type="SMR" id="O26250"/>
<dbReference type="FunCoup" id="O26250">
    <property type="interactions" value="112"/>
</dbReference>
<dbReference type="STRING" id="187420.MTH_147"/>
<dbReference type="PaxDb" id="187420-MTH_147"/>
<dbReference type="EnsemblBacteria" id="AAB84653">
    <property type="protein sequence ID" value="AAB84653"/>
    <property type="gene ID" value="MTH_147"/>
</dbReference>
<dbReference type="KEGG" id="mth:MTH_147"/>
<dbReference type="PATRIC" id="fig|187420.15.peg.119"/>
<dbReference type="HOGENOM" id="CLU_074522_0_1_2"/>
<dbReference type="InParanoid" id="O26250"/>
<dbReference type="Proteomes" id="UP000005223">
    <property type="component" value="Chromosome"/>
</dbReference>
<dbReference type="GO" id="GO:0016831">
    <property type="term" value="F:carboxy-lyase activity"/>
    <property type="evidence" value="ECO:0007669"/>
    <property type="project" value="TreeGrafter"/>
</dbReference>
<dbReference type="GO" id="GO:0106141">
    <property type="term" value="F:flavin prenyltransferase activity"/>
    <property type="evidence" value="ECO:0007669"/>
    <property type="project" value="UniProtKB-EC"/>
</dbReference>
<dbReference type="FunFam" id="3.40.50.1950:FF:000001">
    <property type="entry name" value="Flavin prenyltransferase UbiX"/>
    <property type="match status" value="1"/>
</dbReference>
<dbReference type="Gene3D" id="3.40.50.1950">
    <property type="entry name" value="Flavin prenyltransferase-like"/>
    <property type="match status" value="1"/>
</dbReference>
<dbReference type="HAMAP" id="MF_01984">
    <property type="entry name" value="ubiX_pad"/>
    <property type="match status" value="1"/>
</dbReference>
<dbReference type="InterPro" id="IPR036551">
    <property type="entry name" value="Flavin_trans-like"/>
</dbReference>
<dbReference type="InterPro" id="IPR003382">
    <property type="entry name" value="Flavoprotein"/>
</dbReference>
<dbReference type="InterPro" id="IPR004507">
    <property type="entry name" value="UbiX-like"/>
</dbReference>
<dbReference type="NCBIfam" id="NF004685">
    <property type="entry name" value="PRK06029.1"/>
    <property type="match status" value="1"/>
</dbReference>
<dbReference type="NCBIfam" id="TIGR00421">
    <property type="entry name" value="ubiX_pad"/>
    <property type="match status" value="1"/>
</dbReference>
<dbReference type="PANTHER" id="PTHR43374">
    <property type="entry name" value="FLAVIN PRENYLTRANSFERASE"/>
    <property type="match status" value="1"/>
</dbReference>
<dbReference type="PANTHER" id="PTHR43374:SF1">
    <property type="entry name" value="FLAVIN PRENYLTRANSFERASE PAD1, MITOCHONDRIAL"/>
    <property type="match status" value="1"/>
</dbReference>
<dbReference type="Pfam" id="PF02441">
    <property type="entry name" value="Flavoprotein"/>
    <property type="match status" value="1"/>
</dbReference>
<dbReference type="SUPFAM" id="SSF52507">
    <property type="entry name" value="Homo-oligomeric flavin-containing Cys decarboxylases, HFCD"/>
    <property type="match status" value="1"/>
</dbReference>